<reference key="1">
    <citation type="journal article" date="1997" name="Proc. Natl. Acad. Sci. U.S.A.">
        <title>A bacterial basic region leucine zipper histidine kinase regulating toluene degradation.</title>
        <authorList>
            <person name="Lau P.C."/>
            <person name="Wang Y."/>
            <person name="Patel A."/>
            <person name="Labbe D."/>
            <person name="Bergeron H."/>
            <person name="Brousseau R."/>
            <person name="Konishi Y."/>
            <person name="Rawlings M."/>
        </authorList>
    </citation>
    <scope>NUCLEOTIDE SEQUENCE [GENOMIC DNA]</scope>
</reference>
<reference key="2">
    <citation type="submission" date="2007-05" db="EMBL/GenBank/DDBJ databases">
        <title>Complete sequence of Pseudomonas putida F1.</title>
        <authorList>
            <consortium name="US DOE Joint Genome Institute"/>
            <person name="Copeland A."/>
            <person name="Lucas S."/>
            <person name="Lapidus A."/>
            <person name="Barry K."/>
            <person name="Detter J.C."/>
            <person name="Glavina del Rio T."/>
            <person name="Hammon N."/>
            <person name="Israni S."/>
            <person name="Dalin E."/>
            <person name="Tice H."/>
            <person name="Pitluck S."/>
            <person name="Chain P."/>
            <person name="Malfatti S."/>
            <person name="Shin M."/>
            <person name="Vergez L."/>
            <person name="Schmutz J."/>
            <person name="Larimer F."/>
            <person name="Land M."/>
            <person name="Hauser L."/>
            <person name="Kyrpides N."/>
            <person name="Lykidis A."/>
            <person name="Parales R."/>
            <person name="Richardson P."/>
        </authorList>
    </citation>
    <scope>NUCLEOTIDE SEQUENCE [LARGE SCALE GENOMIC DNA]</scope>
    <source>
        <strain>ATCC 700007 / DSM 6899 / JCM 31910 / BCRC 17059 / LMG 24140 / F1</strain>
    </source>
</reference>
<feature type="signal peptide" evidence="2">
    <location>
        <begin position="1"/>
        <end position="23"/>
    </location>
</feature>
<feature type="chain" id="PRO_0000018714" description="Probable efflux pump periplasmic linker protein SepA">
    <location>
        <begin position="24"/>
        <end position="382"/>
    </location>
</feature>
<feature type="coiled-coil region" evidence="1">
    <location>
        <begin position="100"/>
        <end position="136"/>
    </location>
</feature>
<feature type="lipid moiety-binding region" description="N-palmitoyl cysteine" evidence="2">
    <location>
        <position position="24"/>
    </location>
</feature>
<feature type="lipid moiety-binding region" description="S-diacylglycerol cysteine" evidence="2">
    <location>
        <position position="24"/>
    </location>
</feature>
<protein>
    <recommendedName>
        <fullName>Probable efflux pump periplasmic linker protein SepA</fullName>
    </recommendedName>
</protein>
<dbReference type="EMBL" id="U72354">
    <property type="protein sequence ID" value="AAO49780.1"/>
    <property type="molecule type" value="Genomic_DNA"/>
</dbReference>
<dbReference type="EMBL" id="CP000712">
    <property type="protein sequence ID" value="ABQ78998.1"/>
    <property type="status" value="ALT_INIT"/>
    <property type="molecule type" value="Genomic_DNA"/>
</dbReference>
<dbReference type="SMR" id="Q849Q9"/>
<dbReference type="KEGG" id="ppf:Pput_2867"/>
<dbReference type="eggNOG" id="COG0845">
    <property type="taxonomic scope" value="Bacteria"/>
</dbReference>
<dbReference type="HOGENOM" id="CLU_018816_2_1_6"/>
<dbReference type="GO" id="GO:0005886">
    <property type="term" value="C:plasma membrane"/>
    <property type="evidence" value="ECO:0007669"/>
    <property type="project" value="UniProtKB-SubCell"/>
</dbReference>
<dbReference type="GO" id="GO:0022857">
    <property type="term" value="F:transmembrane transporter activity"/>
    <property type="evidence" value="ECO:0007669"/>
    <property type="project" value="InterPro"/>
</dbReference>
<dbReference type="GO" id="GO:0046677">
    <property type="term" value="P:response to antibiotic"/>
    <property type="evidence" value="ECO:0007669"/>
    <property type="project" value="TreeGrafter"/>
</dbReference>
<dbReference type="FunFam" id="2.40.420.20:FF:000001">
    <property type="entry name" value="Efflux RND transporter periplasmic adaptor subunit"/>
    <property type="match status" value="1"/>
</dbReference>
<dbReference type="Gene3D" id="2.40.30.170">
    <property type="match status" value="1"/>
</dbReference>
<dbReference type="Gene3D" id="2.40.420.20">
    <property type="match status" value="1"/>
</dbReference>
<dbReference type="Gene3D" id="2.40.50.100">
    <property type="match status" value="1"/>
</dbReference>
<dbReference type="Gene3D" id="1.10.287.470">
    <property type="entry name" value="Helix hairpin bin"/>
    <property type="match status" value="1"/>
</dbReference>
<dbReference type="InterPro" id="IPR043602">
    <property type="entry name" value="CusB-like_dom_1"/>
</dbReference>
<dbReference type="InterPro" id="IPR032317">
    <property type="entry name" value="CusB_D23"/>
</dbReference>
<dbReference type="InterPro" id="IPR051160">
    <property type="entry name" value="MFP_Efflux"/>
</dbReference>
<dbReference type="InterPro" id="IPR006143">
    <property type="entry name" value="RND_pump_MFP"/>
</dbReference>
<dbReference type="NCBIfam" id="TIGR01730">
    <property type="entry name" value="RND_mfp"/>
    <property type="match status" value="1"/>
</dbReference>
<dbReference type="PANTHER" id="PTHR30158">
    <property type="entry name" value="ACRA/E-RELATED COMPONENT OF DRUG EFFLUX TRANSPORTER"/>
    <property type="match status" value="1"/>
</dbReference>
<dbReference type="PANTHER" id="PTHR30158:SF3">
    <property type="entry name" value="MULTIDRUG EFFLUX PUMP SUBUNIT ACRA-RELATED"/>
    <property type="match status" value="1"/>
</dbReference>
<dbReference type="Pfam" id="PF00529">
    <property type="entry name" value="CusB_dom_1"/>
    <property type="match status" value="1"/>
</dbReference>
<dbReference type="Pfam" id="PF16576">
    <property type="entry name" value="HlyD_D23"/>
    <property type="match status" value="1"/>
</dbReference>
<dbReference type="SUPFAM" id="SSF111369">
    <property type="entry name" value="HlyD-like secretion proteins"/>
    <property type="match status" value="1"/>
</dbReference>
<dbReference type="PROSITE" id="PS51257">
    <property type="entry name" value="PROKAR_LIPOPROTEIN"/>
    <property type="match status" value="1"/>
</dbReference>
<comment type="function">
    <text>Probable periplasmic linker protein component of the SepABC efflux pump with unknown specificity.</text>
</comment>
<comment type="subcellular location">
    <subcellularLocation>
        <location evidence="3">Cell inner membrane</location>
        <topology evidence="2">Lipid-anchor</topology>
    </subcellularLocation>
</comment>
<comment type="similarity">
    <text evidence="3">Belongs to the membrane fusion protein (MFP) (TC 8.A.1) family.</text>
</comment>
<comment type="sequence caution" evidence="3">
    <conflict type="erroneous initiation">
        <sequence resource="EMBL-CDS" id="ABQ78998"/>
    </conflict>
</comment>
<accession>Q849Q9</accession>
<accession>A5W4D8</accession>
<keyword id="KW-0997">Cell inner membrane</keyword>
<keyword id="KW-1003">Cell membrane</keyword>
<keyword id="KW-0175">Coiled coil</keyword>
<keyword id="KW-0449">Lipoprotein</keyword>
<keyword id="KW-0472">Membrane</keyword>
<keyword id="KW-0564">Palmitate</keyword>
<keyword id="KW-0732">Signal</keyword>
<keyword id="KW-0813">Transport</keyword>
<organism>
    <name type="scientific">Pseudomonas putida (strain ATCC 700007 / DSM 6899 / JCM 31910 / BCRC 17059 / LMG 24140 / F1)</name>
    <dbReference type="NCBI Taxonomy" id="351746"/>
    <lineage>
        <taxon>Bacteria</taxon>
        <taxon>Pseudomonadati</taxon>
        <taxon>Pseudomonadota</taxon>
        <taxon>Gammaproteobacteria</taxon>
        <taxon>Pseudomonadales</taxon>
        <taxon>Pseudomonadaceae</taxon>
        <taxon>Pseudomonas</taxon>
    </lineage>
</organism>
<evidence type="ECO:0000255" key="1"/>
<evidence type="ECO:0000255" key="2">
    <source>
        <dbReference type="PROSITE-ProRule" id="PRU00303"/>
    </source>
</evidence>
<evidence type="ECO:0000305" key="3"/>
<name>SEPA_PSEP1</name>
<gene>
    <name type="primary">sepA</name>
    <name type="ordered locus">Pput_2867</name>
</gene>
<sequence>MRLERALRARQLIPLAAIWLLVGCGKQETVESTAVPPEVGVYTVKAQALTLTTDLPGRTSAYRVSEVRPQASGILQKRMFVEGAEVKQGEQLYQIDPRTYEALLARAEASLLTAQNLARRYERLLDTNAISQQQYDDAMATWKQAQAEAQMARINMQYTKVLAPITGRIGRSAVTEGALVTNGQAQELATVTQLDPIYVDVNQPITRLLGLKRALESGRLQRVGDNQAQVSLTLDDGTPYPLKGVLKFSEVSVAPSTGSVTLRAEFPNPDHKLLPGMFVHALLNEGEQQAAILVPHQAVGRDARGVPTVWVVKPDNTVESREVQTLQTVGNAWLLGAGINDGERVITEGVQLARSGITVKPVAAKNVKLMSEFGSQVQAQAH</sequence>
<proteinExistence type="inferred from homology"/>